<evidence type="ECO:0000250" key="1"/>
<evidence type="ECO:0000255" key="2">
    <source>
        <dbReference type="PROSITE-ProRule" id="PRU01066"/>
    </source>
</evidence>
<evidence type="ECO:0000269" key="3">
    <source>
    </source>
</evidence>
<evidence type="ECO:0000269" key="4">
    <source>
    </source>
</evidence>
<evidence type="ECO:0000269" key="5">
    <source ref="3"/>
</evidence>
<evidence type="ECO:0000303" key="6">
    <source>
    </source>
</evidence>
<evidence type="ECO:0000305" key="7"/>
<sequence>MALRIWASSTAKALRLSSASRPHFSPLFRCFSSAAVLDGLKYANSHEWVKHEGSVATIGITDHAQDHLGEVVFVELPEVGGSVTKATGFGAVESVKATSDVNSPISGEIVEVNSKLTKTPGLINKSPYEDGWMIKVKPSNPSELDSLMGPKEYTKFCEEEGAAAH</sequence>
<reference key="1">
    <citation type="journal article" date="1995" name="Plant J.">
        <title>Alternative splicing results in two different transcripts for H-protein of the glycine cleavage system in the C4 species Flaveria trinervia.</title>
        <authorList>
            <person name="Kopriva S."/>
            <person name="Cossu R."/>
            <person name="Bauwe H."/>
        </authorList>
    </citation>
    <scope>NUCLEOTIDE SEQUENCE [GENOMIC DNA / MRNA] (ISOFORMS 1 AND 2)</scope>
    <scope>ALTERNATIVE SPLICING</scope>
    <scope>TISSUE SPECIFICITY</scope>
    <source>
        <tissue>Leaf</tissue>
    </source>
</reference>
<reference key="2">
    <citation type="journal article" date="1995" name="Mol. Gen. Genet.">
        <title>H-protein of glycine decarboxylase is encoded by multigene families in Flaveria pringlei and F. cronquistii (Asteraceae).</title>
        <authorList>
            <person name="Kopriva S."/>
            <person name="Bauwe H."/>
        </authorList>
    </citation>
    <scope>NUCLEOTIDE SEQUENCE [GENOMIC DNA]</scope>
    <source>
        <tissue>Leaf</tissue>
    </source>
</reference>
<reference key="3">
    <citation type="journal article" date="1996" name="Plant Cell Environ.">
        <title>Molecular phylogeny of Flaveria as deduced from the analysis of H-protein nucleotide sequences.</title>
        <authorList>
            <person name="Kopriva S."/>
            <person name="Chu C.C."/>
            <person name="Bauwe H."/>
        </authorList>
    </citation>
    <scope>NUCLEOTIDE SEQUENCE [MRNA] OF 1-143 (ISOFORM 1)</scope>
    <scope>ALTERNATIVE SPLICING</scope>
</reference>
<reference key="4">
    <citation type="journal article" date="1996" name="Plant J.">
        <title>H-protein of the glycine cleavage system in Flaveria: alternative splicing of the pre-mRNA occurs exclusively in advanced C4 species of the genus.</title>
        <authorList>
            <person name="Kopriva S."/>
            <person name="Chu C.-C."/>
            <person name="Bauwe H."/>
        </authorList>
    </citation>
    <scope>ALTERNATIVE SPLICING</scope>
    <source>
        <tissue>Leaf</tissue>
    </source>
</reference>
<dbReference type="EMBL" id="Z37523">
    <property type="protein sequence ID" value="CAA85760.1"/>
    <property type="molecule type" value="mRNA"/>
</dbReference>
<dbReference type="EMBL" id="Z48797">
    <property type="protein sequence ID" value="CAA88734.1"/>
    <property type="molecule type" value="Genomic_DNA"/>
</dbReference>
<dbReference type="EMBL" id="Z70303">
    <property type="protein sequence ID" value="CAA94316.1"/>
    <property type="molecule type" value="mRNA"/>
</dbReference>
<dbReference type="PIR" id="S49232">
    <property type="entry name" value="S49232"/>
</dbReference>
<dbReference type="PIR" id="S57665">
    <property type="entry name" value="S57665"/>
</dbReference>
<dbReference type="SMR" id="P46485"/>
<dbReference type="GO" id="GO:0005960">
    <property type="term" value="C:glycine cleavage complex"/>
    <property type="evidence" value="ECO:0007669"/>
    <property type="project" value="InterPro"/>
</dbReference>
<dbReference type="GO" id="GO:0005739">
    <property type="term" value="C:mitochondrion"/>
    <property type="evidence" value="ECO:0007669"/>
    <property type="project" value="UniProtKB-SubCell"/>
</dbReference>
<dbReference type="GO" id="GO:0019464">
    <property type="term" value="P:glycine decarboxylation via glycine cleavage system"/>
    <property type="evidence" value="ECO:0007669"/>
    <property type="project" value="InterPro"/>
</dbReference>
<dbReference type="CDD" id="cd06848">
    <property type="entry name" value="GCS_H"/>
    <property type="match status" value="1"/>
</dbReference>
<dbReference type="FunFam" id="2.40.50.100:FF:000011">
    <property type="entry name" value="Glycine cleavage system H protein"/>
    <property type="match status" value="1"/>
</dbReference>
<dbReference type="Gene3D" id="2.40.50.100">
    <property type="match status" value="1"/>
</dbReference>
<dbReference type="HAMAP" id="MF_00272">
    <property type="entry name" value="GcvH"/>
    <property type="match status" value="1"/>
</dbReference>
<dbReference type="InterPro" id="IPR003016">
    <property type="entry name" value="2-oxoA_DH_lipoyl-BS"/>
</dbReference>
<dbReference type="InterPro" id="IPR000089">
    <property type="entry name" value="Biotin_lipoyl"/>
</dbReference>
<dbReference type="InterPro" id="IPR002930">
    <property type="entry name" value="GCV_H"/>
</dbReference>
<dbReference type="InterPro" id="IPR033753">
    <property type="entry name" value="GCV_H/Fam206"/>
</dbReference>
<dbReference type="InterPro" id="IPR017453">
    <property type="entry name" value="GCV_H_sub"/>
</dbReference>
<dbReference type="InterPro" id="IPR011053">
    <property type="entry name" value="Single_hybrid_motif"/>
</dbReference>
<dbReference type="NCBIfam" id="TIGR00527">
    <property type="entry name" value="gcvH"/>
    <property type="match status" value="1"/>
</dbReference>
<dbReference type="NCBIfam" id="NF002270">
    <property type="entry name" value="PRK01202.1"/>
    <property type="match status" value="1"/>
</dbReference>
<dbReference type="PANTHER" id="PTHR11715">
    <property type="entry name" value="GLYCINE CLEAVAGE SYSTEM H PROTEIN"/>
    <property type="match status" value="1"/>
</dbReference>
<dbReference type="PANTHER" id="PTHR11715:SF27">
    <property type="entry name" value="GLYCINE CLEAVAGE SYSTEM H PROTEIN 1, MITOCHONDRIAL-RELATED"/>
    <property type="match status" value="1"/>
</dbReference>
<dbReference type="Pfam" id="PF01597">
    <property type="entry name" value="GCV_H"/>
    <property type="match status" value="1"/>
</dbReference>
<dbReference type="SUPFAM" id="SSF51230">
    <property type="entry name" value="Single hybrid motif"/>
    <property type="match status" value="1"/>
</dbReference>
<dbReference type="PROSITE" id="PS50968">
    <property type="entry name" value="BIOTINYL_LIPOYL"/>
    <property type="match status" value="1"/>
</dbReference>
<dbReference type="PROSITE" id="PS00189">
    <property type="entry name" value="LIPOYL"/>
    <property type="match status" value="1"/>
</dbReference>
<gene>
    <name type="primary">GDCSH</name>
    <name type="synonym">GCDH</name>
    <name type="synonym">GCSH</name>
</gene>
<protein>
    <recommendedName>
        <fullName>Glycine cleavage system H protein, mitochondrial</fullName>
    </recommendedName>
    <alternativeName>
        <fullName>Lipoyl-bearing H protein</fullName>
    </alternativeName>
</protein>
<keyword id="KW-0025">Alternative splicing</keyword>
<keyword id="KW-0450">Lipoyl</keyword>
<keyword id="KW-0496">Mitochondrion</keyword>
<keyword id="KW-0809">Transit peptide</keyword>
<comment type="function">
    <text>The glycine cleavage system catalyzes the degradation of glycine. The H protein shuttles the methylamine group of glycine from the P protein to the T protein.</text>
</comment>
<comment type="cofactor">
    <cofactor evidence="1">
        <name>(R)-lipoate</name>
        <dbReference type="ChEBI" id="CHEBI:83088"/>
    </cofactor>
    <text evidence="1">Binds 1 lipoyl cofactor covalently.</text>
</comment>
<comment type="subunit">
    <text>The glycine cleavage system is composed of four components that only loosely associate: the P protein (EC 1.4.4.2), the T protein (EC 2.1.2.10), the L protein (EC 1.8.1.4) and the lipoyl-bearing H protein.</text>
</comment>
<comment type="subcellular location">
    <subcellularLocation>
        <location evidence="1">Mitochondrion</location>
    </subcellularLocation>
</comment>
<comment type="alternative products">
    <event type="alternative splicing"/>
    <isoform>
        <id>P46485-1</id>
        <name>1</name>
        <sequence type="displayed"/>
    </isoform>
    <isoform>
        <id>P46485-2</id>
        <name>2</name>
        <sequence type="described" ref="VSP_040391"/>
    </isoform>
    <text evidence="3 4 5">This alternative splicing is restricted to C4 species of Flaveria.</text>
</comment>
<comment type="tissue specificity">
    <text evidence="3">Expressed in roots, stems and leaves.</text>
</comment>
<comment type="miscellaneous">
    <molecule>Isoform 1</molecule>
    <text>Major isoform in stems and leaves.</text>
</comment>
<comment type="miscellaneous">
    <molecule>Isoform 2</molecule>
    <text evidence="7">Major isoform in roots.</text>
</comment>
<comment type="similarity">
    <text evidence="7">Belongs to the GcvH family.</text>
</comment>
<name>GCSH_FLATR</name>
<feature type="transit peptide" description="Mitochondrion" evidence="1">
    <location>
        <begin position="1"/>
        <end position="31"/>
    </location>
</feature>
<feature type="chain" id="PRO_0000010735" description="Glycine cleavage system H protein, mitochondrial">
    <location>
        <begin position="32"/>
        <end position="165"/>
    </location>
</feature>
<feature type="domain" description="Lipoyl-binding" evidence="2">
    <location>
        <begin position="55"/>
        <end position="137"/>
    </location>
</feature>
<feature type="modified residue" description="N6-lipoyllysine" evidence="1 2">
    <location>
        <position position="96"/>
    </location>
</feature>
<feature type="splice variant" id="VSP_040391" description="In isoform 2." evidence="6">
    <location>
        <begin position="34"/>
        <end position="35"/>
    </location>
</feature>
<proteinExistence type="evidence at transcript level"/>
<organism>
    <name type="scientific">Flaveria trinervia</name>
    <name type="common">Clustered yellowtops</name>
    <name type="synonym">Oedera trinervia</name>
    <dbReference type="NCBI Taxonomy" id="4227"/>
    <lineage>
        <taxon>Eukaryota</taxon>
        <taxon>Viridiplantae</taxon>
        <taxon>Streptophyta</taxon>
        <taxon>Embryophyta</taxon>
        <taxon>Tracheophyta</taxon>
        <taxon>Spermatophyta</taxon>
        <taxon>Magnoliopsida</taxon>
        <taxon>eudicotyledons</taxon>
        <taxon>Gunneridae</taxon>
        <taxon>Pentapetalae</taxon>
        <taxon>asterids</taxon>
        <taxon>campanulids</taxon>
        <taxon>Asterales</taxon>
        <taxon>Asteraceae</taxon>
        <taxon>Asteroideae</taxon>
        <taxon>Heliantheae alliance</taxon>
        <taxon>Tageteae</taxon>
        <taxon>Flaveria</taxon>
    </lineage>
</organism>
<accession>P46485</accession>
<accession>Q39733</accession>